<dbReference type="EC" id="4.6.1.-" evidence="3"/>
<dbReference type="EMBL" id="DQ218155">
    <property type="protein sequence ID" value="ABA62021.1"/>
    <property type="molecule type" value="mRNA"/>
</dbReference>
<dbReference type="PDB" id="3RLG">
    <property type="method" value="X-ray"/>
    <property type="resolution" value="1.60 A"/>
    <property type="chains" value="A=28-306"/>
</dbReference>
<dbReference type="PDB" id="3RLH">
    <property type="method" value="X-ray"/>
    <property type="resolution" value="1.72 A"/>
    <property type="chains" value="A=1-306"/>
</dbReference>
<dbReference type="PDBsum" id="3RLG"/>
<dbReference type="PDBsum" id="3RLH"/>
<dbReference type="SMR" id="P0CE80"/>
<dbReference type="ABCD" id="P0CE80">
    <property type="antibodies" value="2 sequenced antibodies"/>
</dbReference>
<dbReference type="EvolutionaryTrace" id="P0CE80"/>
<dbReference type="GO" id="GO:0005576">
    <property type="term" value="C:extracellular region"/>
    <property type="evidence" value="ECO:0007669"/>
    <property type="project" value="UniProtKB-SubCell"/>
</dbReference>
<dbReference type="GO" id="GO:0016829">
    <property type="term" value="F:lyase activity"/>
    <property type="evidence" value="ECO:0007669"/>
    <property type="project" value="UniProtKB-KW"/>
</dbReference>
<dbReference type="GO" id="GO:0046872">
    <property type="term" value="F:metal ion binding"/>
    <property type="evidence" value="ECO:0007669"/>
    <property type="project" value="UniProtKB-KW"/>
</dbReference>
<dbReference type="GO" id="GO:0008081">
    <property type="term" value="F:phosphoric diester hydrolase activity"/>
    <property type="evidence" value="ECO:0007669"/>
    <property type="project" value="InterPro"/>
</dbReference>
<dbReference type="GO" id="GO:0090729">
    <property type="term" value="F:toxin activity"/>
    <property type="evidence" value="ECO:0007669"/>
    <property type="project" value="UniProtKB-KW"/>
</dbReference>
<dbReference type="GO" id="GO:0031640">
    <property type="term" value="P:killing of cells of another organism"/>
    <property type="evidence" value="ECO:0007669"/>
    <property type="project" value="UniProtKB-KW"/>
</dbReference>
<dbReference type="GO" id="GO:0016042">
    <property type="term" value="P:lipid catabolic process"/>
    <property type="evidence" value="ECO:0007669"/>
    <property type="project" value="UniProtKB-KW"/>
</dbReference>
<dbReference type="CDD" id="cd08576">
    <property type="entry name" value="GDPD_like_SMaseD_PLD"/>
    <property type="match status" value="1"/>
</dbReference>
<dbReference type="Gene3D" id="3.20.20.190">
    <property type="entry name" value="Phosphatidylinositol (PI) phosphodiesterase"/>
    <property type="match status" value="1"/>
</dbReference>
<dbReference type="InterPro" id="IPR017946">
    <property type="entry name" value="PLC-like_Pdiesterase_TIM-brl"/>
</dbReference>
<dbReference type="Pfam" id="PF13653">
    <property type="entry name" value="GDPD_2"/>
    <property type="match status" value="1"/>
</dbReference>
<dbReference type="SUPFAM" id="SSF51695">
    <property type="entry name" value="PLC-like phosphodiesterases"/>
    <property type="match status" value="1"/>
</dbReference>
<reference key="1">
    <citation type="journal article" date="2006" name="Biochimie">
        <title>Molecular cloning and functional characterization of two isoforms of dermonecrotic toxin from Loxosceles intermedia (Brown spider) venom gland.</title>
        <authorList>
            <person name="da Silveira R.B."/>
            <person name="Pigozzo R.B."/>
            <person name="Chaim O.M."/>
            <person name="Appel M.H."/>
            <person name="Dreyfuss J.L."/>
            <person name="Toma L."/>
            <person name="Mangili O.C."/>
            <person name="Gremski W."/>
            <person name="Dietrich C.P."/>
            <person name="Nader H.B."/>
            <person name="Veiga S.S."/>
        </authorList>
    </citation>
    <scope>NUCLEOTIDE SEQUENCE [MRNA]</scope>
    <scope>CATALYTIC ACTIVITY</scope>
    <scope>FUNCTION</scope>
    <source>
        <tissue>Venom gland</tissue>
    </source>
</reference>
<reference key="2">
    <citation type="journal article" date="2006" name="Toxicol. Appl. Pharmacol.">
        <title>Brown spider dermonecrotic toxin directly induces nephrotoxicity.</title>
        <authorList>
            <person name="Chaim O.M."/>
            <person name="Sade Y.B."/>
            <person name="da Silveira R.B."/>
            <person name="Toma L."/>
            <person name="Kalapothakis E."/>
            <person name="Chavez-Olortegui C."/>
            <person name="Mangili O.C."/>
            <person name="Gremski W."/>
            <person name="Dietrich C.P."/>
            <person name="Nader H.B."/>
            <person name="Veiga S.S."/>
        </authorList>
    </citation>
    <scope>NUCLEOTIDE SEQUENCE [MRNA]</scope>
    <source>
        <tissue>Venom gland</tissue>
    </source>
</reference>
<reference key="3">
    <citation type="journal article" date="1998" name="Biochem. Biophys. Res. Commun.">
        <title>Sphingomyelinases in the venom of the spider Loxosceles intermedia are responsible for both dermonecrosis and complement-dependent hemolysis.</title>
        <authorList>
            <person name="Tambourgi D.V."/>
            <person name="Magnoli F.C."/>
            <person name="van den Berg C.W."/>
            <person name="Morgan B.P."/>
            <person name="de Araujo P.S."/>
            <person name="Alves E.W."/>
            <person name="Da Silva W.D."/>
        </authorList>
    </citation>
    <scope>PROTEIN SEQUENCE OF 27-64</scope>
    <scope>FUNCTION</scope>
    <scope>CATALYTIC ACTIVITY</scope>
    <scope>SUBCELLULAR LOCATION</scope>
    <source>
        <tissue>Venom</tissue>
    </source>
</reference>
<reference key="4">
    <citation type="journal article" date="2007" name="Toxicon">
        <title>Biological and structural comparison of recombinant phospholipase D toxins from Loxosceles intermedia (brown spider) venom.</title>
        <authorList>
            <person name="Ribeiro R.O."/>
            <person name="Chaim O.M."/>
            <person name="da Silveira R.B."/>
            <person name="Gremski L.H."/>
            <person name="Sade Y.B."/>
            <person name="Paludo K.S."/>
            <person name="Senff-Ribeiro A."/>
            <person name="de Moura J."/>
            <person name="Chavez-Olortegui C."/>
            <person name="Gremski W."/>
            <person name="Nader H.B."/>
            <person name="Veiga S.S."/>
        </authorList>
    </citation>
    <scope>FUNCTION</scope>
    <scope>BIOASSAY</scope>
</reference>
<reference key="5">
    <citation type="journal article" date="2008" name="Biochimie">
        <title>Nephrotoxicity caused by brown spider venom phospholipase-D (dermonecrotic toxin) depends on catalytic activity.</title>
        <authorList>
            <person name="Kusma J."/>
            <person name="Chaim O.M."/>
            <person name="Wille A.C."/>
            <person name="Ferrer V.P."/>
            <person name="Sade Y.B."/>
            <person name="Donatti L."/>
            <person name="Gremski W."/>
            <person name="Mangili O.C."/>
            <person name="Veiga S.S."/>
        </authorList>
    </citation>
    <scope>FUNCTION</scope>
    <scope>BIOASSAY</scope>
    <scope>MUTAGENESIS OF HIS-38</scope>
    <scope>ACTIVE SITE</scope>
</reference>
<reference key="6">
    <citation type="journal article" date="2008" name="Toxicon">
        <title>Effects of the venom and the dermonecrotic toxin LiRecDT1 of Loxosceles intermedia in the rat liver.</title>
        <authorList>
            <person name="de Oliveira Christoff A."/>
            <person name="de Oliveira A."/>
            <person name="Chaim O.M."/>
            <person name="Lugarini D."/>
            <person name="Bastos Pereira A.L."/>
            <person name="Paludo K.S."/>
            <person name="Queiroz Telles J.E."/>
            <person name="Bracht A."/>
            <person name="Veiga S.S."/>
            <person name="Acco A."/>
        </authorList>
    </citation>
    <scope>FUNCTION ON RAT LIVER</scope>
</reference>
<reference key="7">
    <citation type="journal article" date="2009" name="J. Cell. Biochem.">
        <title>Identification of a direct hemolytic effect dependent on the catalytic activity induced by phospholipase-D (dermonecrotic toxin) from brown spider venom.</title>
        <authorList>
            <person name="Chaves-Moreira D."/>
            <person name="Chaim O.M."/>
            <person name="Sade Y.B."/>
            <person name="Paludo K.S."/>
            <person name="Gremski L.H."/>
            <person name="Donatti L."/>
            <person name="de Moura J."/>
            <person name="Mangili O.C."/>
            <person name="Gremski W."/>
            <person name="da Silveira R.B."/>
            <person name="Senff-Ribeiro A."/>
            <person name="Veiga S.S."/>
        </authorList>
    </citation>
    <scope>FUNCTION</scope>
    <scope>ACTIVITY REGULATION</scope>
    <scope>MUTAGENESIS OF HIS-38</scope>
    <scope>ACTIVE SITE</scope>
</reference>
<reference key="8">
    <citation type="journal article" date="2011" name="J. Cell. Biochem.">
        <title>The relationship between calcium and the metabolism of plasma membrane phospholipids in hemolysis induced by brown spider venom phospholipase-D toxin.</title>
        <authorList>
            <person name="Chaves-Moreira D."/>
            <person name="Souza F.N."/>
            <person name="Fogaca R.T."/>
            <person name="Mangili O.C."/>
            <person name="Gremski W."/>
            <person name="Senff-Ribeiro A."/>
            <person name="Chaim O.M."/>
            <person name="Veiga S.S."/>
        </authorList>
    </citation>
    <scope>FUNCTION</scope>
    <scope>CATALYTIC ACTIVITY</scope>
    <scope>MUTAGENESIS OF HIS-38</scope>
    <scope>SUBSTRATE SPECIFICITY</scope>
    <scope>ACTIVE SITE</scope>
</reference>
<reference key="9">
    <citation type="journal article" date="2016" name="Biochim. Biophys. Acta">
        <title>Active site mapping of Loxosceles phospholipases D: biochemical and biological features.</title>
        <authorList>
            <person name="Vuitika L."/>
            <person name="Chaves-Moreira D."/>
            <person name="Caruso I."/>
            <person name="Lima M.A."/>
            <person name="Matsubara F.H."/>
            <person name="Murakami M.T."/>
            <person name="Takahashi H.K."/>
            <person name="Toledo M.S."/>
            <person name="Coronado M.A."/>
            <person name="Nader H.B."/>
            <person name="Senff-Ribeiro A."/>
            <person name="Chaim O.M."/>
            <person name="Arni R.K."/>
            <person name="Veiga S.S."/>
        </authorList>
    </citation>
    <scope>FUNCTION</scope>
    <scope>CATALYTIC ACTIVITY</scope>
    <scope>MUTAGENESIS OF HIS-38; GLU-58; ASP-60; HIS-74; CYS-80; LYS-120; GLY-122; CYS-223; TYR-249 AND TRP-251</scope>
    <scope>SUBSTRATE SPECIFICITY</scope>
    <scope>ACTIVE SITES</scope>
</reference>
<reference key="10">
    <citation type="journal article" date="2023" name="Toxins">
        <title>Brown spider venom phospholipase-D activity upon different lipid substrates.</title>
        <authorList>
            <person name="Chaves-Moreira D."/>
            <person name="Gremski L.H."/>
            <person name="de Moraes F.R."/>
            <person name="Vuitika L."/>
            <person name="Wille A.C.M."/>
            <person name="Hernandez Gonzalez J.E."/>
            <person name="Chaim O.M."/>
            <person name="Senff-Ribeiro A."/>
            <person name="Arni R.K."/>
            <person name="Veiga S.S."/>
        </authorList>
    </citation>
    <scope>FUNCTION</scope>
    <scope>SUBSTRATE SPECIFICITY</scope>
    <scope>ACTIVE SITES</scope>
    <scope>MUTAGENESIS OF HIS-38 AND HIS-74</scope>
</reference>
<reference key="11">
    <citation type="journal article" date="2011" name="Acta Crystallogr. F">
        <title>Crystallization and preliminary X-ray diffraction analysis of a class II phospholipase D from Loxosceles intermedia venom.</title>
        <authorList>
            <person name="Ullah A."/>
            <person name="de Giuseppe P.O."/>
            <person name="Murakami M.T."/>
            <person name="Trevisan-Silva D."/>
            <person name="Wille A.C."/>
            <person name="Chaves-Moreira D."/>
            <person name="Gremski L.H."/>
            <person name="da Silveira R.B."/>
            <person name="Sennf-Ribeiro A."/>
            <person name="Chaim O.M."/>
            <person name="Veiga S.S."/>
            <person name="Arni R.K."/>
        </authorList>
    </citation>
    <scope>X-RAY CRYSTALLOGRAPHY (1.6 ANGSTROMS) OF 28-306 IN COMPLEX WITH MAGNESIUM</scope>
    <scope>DISULFIDE BONDS</scope>
    <scope>MUTAGENESIS OF HIS-38</scope>
    <scope>ACTIVE SITE</scope>
    <scope>COFACTOR</scope>
</reference>
<reference key="12">
    <citation type="journal article" date="2011" name="Biochem. Biophys. Res. Commun.">
        <title>Structure of a novel class II phospholipase D: catalytic cleft is modified by a disulphide bridge.</title>
        <authorList>
            <person name="de Giuseppe P.O."/>
            <person name="Ullah A."/>
            <person name="Silva D.T."/>
            <person name="Gremski L.H."/>
            <person name="Wille A.C."/>
            <person name="Chaves Moreira D."/>
            <person name="Ribeiro A.S."/>
            <person name="Chaim O.M."/>
            <person name="Murakami M.T."/>
            <person name="Veiga S.S."/>
            <person name="Arni R.K."/>
        </authorList>
    </citation>
    <scope>X-RAY CRYSTALLOGRAPHY (1.72 ANGSTROMS) IN COMPLEX WITH MAGNESIUM</scope>
</reference>
<protein>
    <recommendedName>
        <fullName>Dermonecrotic toxin LiSicTox-alphaIA1a</fullName>
        <ecNumber evidence="3">4.6.1.-</ecNumber>
    </recommendedName>
    <alternativeName>
        <fullName evidence="18">Dermonecrotic toxin 1</fullName>
        <shortName evidence="18">DT1</shortName>
        <shortName evidence="17 18">LiRecDT1</shortName>
    </alternativeName>
    <alternativeName>
        <fullName evidence="19">P1</fullName>
    </alternativeName>
    <alternativeName>
        <fullName>Phospholipase D</fullName>
        <shortName>PLD</shortName>
    </alternativeName>
    <alternativeName>
        <fullName>Sphingomyelin phosphodiesterase D 1</fullName>
        <shortName>SMD 1</shortName>
        <shortName>SMase D 1</shortName>
        <shortName>Sphingomyelinase D 1</shortName>
    </alternativeName>
</protein>
<feature type="signal peptide" evidence="4">
    <location>
        <begin position="1"/>
        <end position="18"/>
    </location>
</feature>
<feature type="propeptide" id="PRO_0000035579" evidence="16">
    <location>
        <begin position="19"/>
        <end position="26"/>
    </location>
</feature>
<feature type="chain" id="PRO_0000035580" description="Dermonecrotic toxin LiSicTox-alphaIA1a" evidence="24">
    <location>
        <begin position="27"/>
        <end position="306"/>
    </location>
</feature>
<feature type="active site" evidence="8 10 11 12 14 15">
    <location>
        <position position="38"/>
    </location>
</feature>
<feature type="active site" description="Nucleophile" evidence="14 15">
    <location>
        <position position="74"/>
    </location>
</feature>
<feature type="binding site" evidence="11 13 25 26">
    <location>
        <position position="58"/>
    </location>
    <ligand>
        <name>Mg(2+)</name>
        <dbReference type="ChEBI" id="CHEBI:18420"/>
    </ligand>
</feature>
<feature type="binding site" evidence="11 13 25 26">
    <location>
        <position position="60"/>
    </location>
    <ligand>
        <name>Mg(2+)</name>
        <dbReference type="ChEBI" id="CHEBI:18420"/>
    </ligand>
</feature>
<feature type="binding site" evidence="11 13 25 26">
    <location>
        <position position="118"/>
    </location>
    <ligand>
        <name>Mg(2+)</name>
        <dbReference type="ChEBI" id="CHEBI:18420"/>
    </ligand>
</feature>
<feature type="disulfide bond" evidence="11 13 25 26">
    <location>
        <begin position="78"/>
        <end position="84"/>
    </location>
</feature>
<feature type="disulfide bond" evidence="11 13 25 26">
    <location>
        <begin position="80"/>
        <end position="223"/>
    </location>
</feature>
<feature type="mutagenesis site" description="Loss of catalytic activity on sphingomyelin. Loss of catalytic activity on sphingomyelin and lysophosphatidylcholine, and loss of hemolytic, vascular permeability, nephrotoxic, and dermonecrotic activities. Loss of catalytic activity on sphingomyelin and lysophosphatidylcholine, and loss of hemolytic, vascular permeability, and dermonecrotic activities; when associated with A-74." evidence="8 10 11 12 14 15">
    <original>H</original>
    <variation>A</variation>
    <location>
        <position position="38"/>
    </location>
</feature>
<feature type="mutagenesis site" description="Loss of catalytic activity on sphingomyelin. Loss of catalytic activity on sphingomyelin and lysophosphatidylcholine, high decrease of hemolytic activity, and loss of vascular permeability and dermonecrotic activities; when associated with A-60." evidence="14">
    <original>E</original>
    <variation>A</variation>
    <location>
        <position position="58"/>
    </location>
</feature>
<feature type="mutagenesis site" description="Loss of catalytic activity on sphingomyelin. Loss of catalytic activity on sphingomyelin and lysophosphatidylcholine, high decrease of hemolytic activity, and loss of vascular permeability and dermonecrotic activities; when associated with A-58." evidence="14">
    <original>D</original>
    <variation>A</variation>
    <location>
        <position position="60"/>
    </location>
</feature>
<feature type="mutagenesis site" description="Loss of catalytic activity on sphingomyelin. Loss of catalytic activity on sphingomyelin and lysophosphatidylcholine, and high decrease of hemolytic activity; when associated with A-38." evidence="14 15">
    <original>H</original>
    <variation>A</variation>
    <location>
        <position position="74"/>
    </location>
</feature>
<feature type="mutagenesis site" description="Moderate decrease of catalytic activity on sphingomyelin and lysophosphatidylcholine, and moderate decrease of hemolytic, vascular permeability, and dermonecrotic activities; when associated with A-223." evidence="14">
    <original>C</original>
    <variation>A</variation>
    <location>
        <position position="80"/>
    </location>
</feature>
<feature type="mutagenesis site" description="Important decrease of catalytic activity on sphingomyelin and lysophosphatidylcholine, and moderate decrease of hemolytic, vascular permeability, and dermonecrotic activities." evidence="14">
    <original>K</original>
    <variation>A</variation>
    <location>
        <position position="120"/>
    </location>
</feature>
<feature type="mutagenesis site" description="No or very weak change in catalytic activity on sphingomyelin and lysophosphatidylcholine, and no change in hemolytic, vascular permeability, and dermonecrotic activities." evidence="14">
    <original>G</original>
    <variation>A</variation>
    <location>
        <position position="122"/>
    </location>
</feature>
<feature type="mutagenesis site" description="Moderate decrease of catalytic activity on sphingomyelin and lysophosphatidylcholine, and moderate decrease of hemolytic, vascular permeability, and dermonecrotic activities; when associated with A-80." evidence="14">
    <original>C</original>
    <variation>A</variation>
    <location>
        <position position="223"/>
    </location>
</feature>
<feature type="mutagenesis site" description="Loss of catalytic activity on sphingomyelin and lysophosphatidylcholine, high decrease of hemolytic activity, and loss of vascular permeability and dermonecrotic activities." evidence="14">
    <original>Y</original>
    <variation>A</variation>
    <location>
        <position position="249"/>
    </location>
</feature>
<feature type="mutagenesis site" description="Moderate decrease of catalytic activity on sphingomyelin and lysophosphatidylcholine, and moderate decrease of hemolytic, vascular permeability, and dermonecrotic activities." evidence="14">
    <original>W</original>
    <variation>A</variation>
    <location>
        <position position="251"/>
    </location>
</feature>
<feature type="sequence conflict" description="In Ref. 3; AA sequence." evidence="20" ref="3">
    <original>E</original>
    <variation>EI</variation>
    <location>
        <position position="58"/>
    </location>
</feature>
<feature type="sequence conflict" description="In Ref. 3; AA sequence." evidence="20" ref="3">
    <original>S</original>
    <variation>F</variation>
    <location>
        <position position="62"/>
    </location>
</feature>
<feature type="strand" evidence="27">
    <location>
        <begin position="31"/>
        <end position="38"/>
    </location>
</feature>
<feature type="helix" evidence="27">
    <location>
        <begin position="45"/>
        <end position="51"/>
    </location>
</feature>
<feature type="strand" evidence="27">
    <location>
        <begin position="55"/>
        <end position="61"/>
    </location>
</feature>
<feature type="helix" evidence="27">
    <location>
        <begin position="90"/>
        <end position="101"/>
    </location>
</feature>
<feature type="strand" evidence="27">
    <location>
        <begin position="114"/>
        <end position="119"/>
    </location>
</feature>
<feature type="helix" evidence="27">
    <location>
        <begin position="121"/>
        <end position="123"/>
    </location>
</feature>
<feature type="helix" evidence="27">
    <location>
        <begin position="126"/>
        <end position="128"/>
    </location>
</feature>
<feature type="helix" evidence="27">
    <location>
        <begin position="129"/>
        <end position="143"/>
    </location>
</feature>
<feature type="helix" evidence="27">
    <location>
        <begin position="146"/>
        <end position="148"/>
    </location>
</feature>
<feature type="strand" evidence="27">
    <location>
        <begin position="155"/>
        <end position="161"/>
    </location>
</feature>
<feature type="helix" evidence="27">
    <location>
        <begin position="163"/>
        <end position="166"/>
    </location>
</feature>
<feature type="helix" evidence="27">
    <location>
        <begin position="167"/>
        <end position="178"/>
    </location>
</feature>
<feature type="helix" evidence="27">
    <location>
        <begin position="182"/>
        <end position="187"/>
    </location>
</feature>
<feature type="strand" evidence="27">
    <location>
        <begin position="188"/>
        <end position="192"/>
    </location>
</feature>
<feature type="helix" evidence="27">
    <location>
        <begin position="198"/>
        <end position="207"/>
    </location>
</feature>
<feature type="strand" evidence="27">
    <location>
        <begin position="214"/>
        <end position="219"/>
    </location>
</feature>
<feature type="helix" evidence="27">
    <location>
        <begin position="229"/>
        <end position="238"/>
    </location>
</feature>
<feature type="strand" evidence="27">
    <location>
        <begin position="246"/>
        <end position="251"/>
    </location>
</feature>
<feature type="helix" evidence="27">
    <location>
        <begin position="256"/>
        <end position="264"/>
    </location>
</feature>
<feature type="strand" evidence="27">
    <location>
        <begin position="268"/>
        <end position="273"/>
    </location>
</feature>
<feature type="helix" evidence="27">
    <location>
        <begin position="275"/>
        <end position="282"/>
    </location>
</feature>
<feature type="helix" evidence="27">
    <location>
        <begin position="285"/>
        <end position="288"/>
    </location>
</feature>
<feature type="strand" evidence="27">
    <location>
        <begin position="291"/>
        <end position="293"/>
    </location>
</feature>
<proteinExistence type="evidence at protein level"/>
<name>A1HA_LOXIN</name>
<comment type="function">
    <text evidence="1 5 6 7 9 12 14 16">Dermonecrotic toxins cleave the phosphodiester linkage between the phosphate and headgroup of certain phospholipids (sphingolipid and lysolipid substrates), forming an alcohol (often choline) and a cyclic phosphate (By similarity). This toxin acts on sphingomyelin (SM) with high activity (PubMed:16581177, PubMed:21590705, PubMed:27233517, PubMed:36828423, PubMed:9790962). It discriminate between the number of carbon atoms in the substrates, since it prefers SM with six carbons in the fatty acid chain (SM6:0) to other SMs (SM12:0 &gt; SM16:0 &gt; SM18:0 &gt; SM2:0 &gt; SM24:0) (PubMed:36828423). It also acts on lysophosphatidylcholine (LPC) (LPC16:0 = LPC12:0 &gt; LPC18:0), and lyso-platelet activating factor (LPAF, an alkyl-LPC) but not on phosphatidylcholine (PC) (PubMed:21590705, PubMed:27233517, PubMed:36828423). It may also act on ceramide phosphoethanolamine (CPE), lysophosphatidylcholine (LPC) and lysophosphatidylethanolamine (LPE), but not on lysophosphatidylserine (LPS), and lysophosphatidylglycerol (LPG) (By similarity). It acts by transphosphatidylation, releasing exclusively cyclic phosphate products as second products (By similarity). In vivo, it induces dermonecrosis, vascular permeability, platelet aggregation, inflammatory response, edema and cytotoxicity against renal epithelial cells (PubMed:16581177, PubMed:17900646, PubMed:27233517, PubMed:9790962). It causes direct nephrotoxicity (PubMed:16005484) and is directly toxic to liver (PubMed:18765244). It also induces hemolysis in a complement-dependent manner as well as in a complement-independent manner (PubMed:17900646, PubMed:21590705, PubMed:27233517, PubMed:9790962). The hemolysis provoked in a complement-independent manner is composed of several steps (PubMed:21590705). The toxin binds to erythrocyte membranes, hydrolyzes membrane phospholipids (SM and LPC) thus generating metabolism products that cause hemolysis, probably by provoking an increase of calcium inside cells (PubMed:21590705). The calcium influx is due to the opening of L-type calcium channels, since L-type calcium channel blockers inhibit calcium influx (PubMed:21590705). Is lethal to mice when intraperitoneally injected (PubMed:17900646).</text>
</comment>
<comment type="catalytic activity">
    <reaction evidence="21 22 23 24">
        <text>an N-(acyl)-sphingosylphosphocholine = an N-(acyl)-sphingosyl-1,3-cyclic phosphate + choline</text>
        <dbReference type="Rhea" id="RHEA:60652"/>
        <dbReference type="ChEBI" id="CHEBI:15354"/>
        <dbReference type="ChEBI" id="CHEBI:64583"/>
        <dbReference type="ChEBI" id="CHEBI:143892"/>
    </reaction>
</comment>
<comment type="catalytic activity">
    <reaction evidence="1">
        <text>an N-(acyl)-sphingosylphosphoethanolamine = an N-(acyl)-sphingosyl-1,3-cyclic phosphate + ethanolamine</text>
        <dbReference type="Rhea" id="RHEA:60648"/>
        <dbReference type="ChEBI" id="CHEBI:57603"/>
        <dbReference type="ChEBI" id="CHEBI:143891"/>
        <dbReference type="ChEBI" id="CHEBI:143892"/>
    </reaction>
</comment>
<comment type="catalytic activity">
    <reaction evidence="22 23">
        <text>a 1-acyl-sn-glycero-3-phosphocholine = a 1-acyl-sn-glycero-2,3-cyclic phosphate + choline</text>
        <dbReference type="Rhea" id="RHEA:60700"/>
        <dbReference type="ChEBI" id="CHEBI:15354"/>
        <dbReference type="ChEBI" id="CHEBI:58168"/>
        <dbReference type="ChEBI" id="CHEBI:143947"/>
    </reaction>
</comment>
<comment type="catalytic activity">
    <reaction evidence="1">
        <text>a 1-acyl-sn-glycero-3-phosphoethanolamine = a 1-acyl-sn-glycero-2,3-cyclic phosphate + ethanolamine</text>
        <dbReference type="Rhea" id="RHEA:60704"/>
        <dbReference type="ChEBI" id="CHEBI:57603"/>
        <dbReference type="ChEBI" id="CHEBI:64381"/>
        <dbReference type="ChEBI" id="CHEBI:143947"/>
    </reaction>
</comment>
<comment type="catalytic activity">
    <reaction evidence="22">
        <text>1-hexadecanoyl-sn-glycero-3-phosphocholine = 1-hexadecanoyl-sn-glycero-2,3-cyclic phosphate + choline</text>
        <dbReference type="Rhea" id="RHEA:60656"/>
        <dbReference type="ChEBI" id="CHEBI:15354"/>
        <dbReference type="ChEBI" id="CHEBI:72998"/>
        <dbReference type="ChEBI" id="CHEBI:143893"/>
    </reaction>
</comment>
<comment type="cofactor">
    <cofactor evidence="11 13 25 26">
        <name>Mg(2+)</name>
        <dbReference type="ChEBI" id="CHEBI:18420"/>
    </cofactor>
    <text evidence="11 13 25 26">Binds 1 Mg(2+) ion per subunit.</text>
</comment>
<comment type="activity regulation">
    <text evidence="10">Catalytic activity and hemolysis are inhibited by divalent ion chelators (1,10-phenanthroline, EDTA, and EGTA).</text>
</comment>
<comment type="subcellular location">
    <subcellularLocation>
        <location evidence="16">Secreted</location>
    </subcellularLocation>
</comment>
<comment type="tissue specificity">
    <text evidence="16">Expressed by the venom gland.</text>
</comment>
<comment type="similarity">
    <text evidence="20">Belongs to the arthropod phospholipase D family. Class II subfamily. Class IIa sub-subfamily.</text>
</comment>
<comment type="caution">
    <text evidence="1 2 3">The most common activity assay for dermonecrotic toxins detects enzymatic activity by monitoring choline release from substrate. Liberation of choline from sphingomyelin (SM) or lysophosphatidylcholine (LPC) is commonly assumed to result from substrate hydrolysis, giving either ceramide-1-phosphate (C1P) or lysophosphatidic acid (LPA), respectively, as a second product. However, two studies from Lajoie and colleagues (2013 and 2015) report the observation of exclusive formation of cyclic phosphate products as second products, resulting from intramolecular transphosphatidylation. Cyclic phosphates have vastly different biological properties from their monoester counterparts, and they may be relevant to the pathology of brown spider envenomation.</text>
</comment>
<organism>
    <name type="scientific">Loxosceles intermedia</name>
    <name type="common">Brown spider</name>
    <dbReference type="NCBI Taxonomy" id="58218"/>
    <lineage>
        <taxon>Eukaryota</taxon>
        <taxon>Metazoa</taxon>
        <taxon>Ecdysozoa</taxon>
        <taxon>Arthropoda</taxon>
        <taxon>Chelicerata</taxon>
        <taxon>Arachnida</taxon>
        <taxon>Araneae</taxon>
        <taxon>Araneomorphae</taxon>
        <taxon>Haplogynae</taxon>
        <taxon>Scytodoidea</taxon>
        <taxon>Sicariidae</taxon>
        <taxon>Loxosceles</taxon>
    </lineage>
</organism>
<sequence length="306" mass="34158">MLPYIVLVLGCWSVLSQAAQTDDEERAGNRRPIWIMGHMVNAIGQIDEFVNLGANSIETDVSFDDNANPEYTYHGIPCDCGRNCKKYENFNDFLKGLRSATTPGNSKYQEKLVLVVFDLKTGSLYDNQANDAGKKLAKNLLQHYWNNGNNGGRAYIVLSIPDLNHYPLIKGFKDQLTKDGHPELMDKVGHDFSGNDDIGDVGKAYKKAGITGHIWQSDGITNCLPRGLSRVNAAVANRDSANGFINKVYYWTVDKRSTTRDALDAGVDGIMTNYPDVITDVLNEAAYKKKFRVATYDENPWVTFKK</sequence>
<keyword id="KW-0002">3D-structure</keyword>
<keyword id="KW-0204">Cytolysis</keyword>
<keyword id="KW-1061">Dermonecrotic toxin</keyword>
<keyword id="KW-0903">Direct protein sequencing</keyword>
<keyword id="KW-1015">Disulfide bond</keyword>
<keyword id="KW-0354">Hemolysis</keyword>
<keyword id="KW-0442">Lipid degradation</keyword>
<keyword id="KW-0443">Lipid metabolism</keyword>
<keyword id="KW-0456">Lyase</keyword>
<keyword id="KW-0460">Magnesium</keyword>
<keyword id="KW-0479">Metal-binding</keyword>
<keyword id="KW-0964">Secreted</keyword>
<keyword id="KW-0732">Signal</keyword>
<keyword id="KW-0800">Toxin</keyword>
<keyword id="KW-0865">Zymogen</keyword>
<evidence type="ECO:0000250" key="1">
    <source>
        <dbReference type="UniProtKB" id="A0A0D4WTV1"/>
    </source>
</evidence>
<evidence type="ECO:0000250" key="2">
    <source>
        <dbReference type="UniProtKB" id="A0A0D4WV12"/>
    </source>
</evidence>
<evidence type="ECO:0000250" key="3">
    <source>
        <dbReference type="UniProtKB" id="Q4ZFU2"/>
    </source>
</evidence>
<evidence type="ECO:0000255" key="4"/>
<evidence type="ECO:0000269" key="5">
    <source>
    </source>
</evidence>
<evidence type="ECO:0000269" key="6">
    <source>
    </source>
</evidence>
<evidence type="ECO:0000269" key="7">
    <source>
    </source>
</evidence>
<evidence type="ECO:0000269" key="8">
    <source>
    </source>
</evidence>
<evidence type="ECO:0000269" key="9">
    <source>
    </source>
</evidence>
<evidence type="ECO:0000269" key="10">
    <source>
    </source>
</evidence>
<evidence type="ECO:0000269" key="11">
    <source>
    </source>
</evidence>
<evidence type="ECO:0000269" key="12">
    <source>
    </source>
</evidence>
<evidence type="ECO:0000269" key="13">
    <source>
    </source>
</evidence>
<evidence type="ECO:0000269" key="14">
    <source>
    </source>
</evidence>
<evidence type="ECO:0000269" key="15">
    <source>
    </source>
</evidence>
<evidence type="ECO:0000269" key="16">
    <source>
    </source>
</evidence>
<evidence type="ECO:0000303" key="17">
    <source>
    </source>
</evidence>
<evidence type="ECO:0000303" key="18">
    <source>
    </source>
</evidence>
<evidence type="ECO:0000303" key="19">
    <source>
    </source>
</evidence>
<evidence type="ECO:0000305" key="20"/>
<evidence type="ECO:0000305" key="21">
    <source>
    </source>
</evidence>
<evidence type="ECO:0000305" key="22">
    <source>
    </source>
</evidence>
<evidence type="ECO:0000305" key="23">
    <source>
    </source>
</evidence>
<evidence type="ECO:0000305" key="24">
    <source>
    </source>
</evidence>
<evidence type="ECO:0000312" key="25">
    <source>
        <dbReference type="PDB" id="3RLG"/>
    </source>
</evidence>
<evidence type="ECO:0000312" key="26">
    <source>
        <dbReference type="PDB" id="3RLH"/>
    </source>
</evidence>
<evidence type="ECO:0007829" key="27">
    <source>
        <dbReference type="PDB" id="3RLG"/>
    </source>
</evidence>
<accession>P0CE80</accession>
<accession>B2KKV9</accession>
<accession>P83045</accession>
<accession>Q3HL91</accession>
<accession>Q6W8Q5</accession>
<accession>Q7YW73</accession>